<gene>
    <name evidence="7 10" type="primary">Lrrc8d</name>
    <name evidence="10" type="synonym">Lrrc5</name>
</gene>
<reference key="1">
    <citation type="journal article" date="2005" name="Science">
        <title>The transcriptional landscape of the mammalian genome.</title>
        <authorList>
            <person name="Carninci P."/>
            <person name="Kasukawa T."/>
            <person name="Katayama S."/>
            <person name="Gough J."/>
            <person name="Frith M.C."/>
            <person name="Maeda N."/>
            <person name="Oyama R."/>
            <person name="Ravasi T."/>
            <person name="Lenhard B."/>
            <person name="Wells C."/>
            <person name="Kodzius R."/>
            <person name="Shimokawa K."/>
            <person name="Bajic V.B."/>
            <person name="Brenner S.E."/>
            <person name="Batalov S."/>
            <person name="Forrest A.R."/>
            <person name="Zavolan M."/>
            <person name="Davis M.J."/>
            <person name="Wilming L.G."/>
            <person name="Aidinis V."/>
            <person name="Allen J.E."/>
            <person name="Ambesi-Impiombato A."/>
            <person name="Apweiler R."/>
            <person name="Aturaliya R.N."/>
            <person name="Bailey T.L."/>
            <person name="Bansal M."/>
            <person name="Baxter L."/>
            <person name="Beisel K.W."/>
            <person name="Bersano T."/>
            <person name="Bono H."/>
            <person name="Chalk A.M."/>
            <person name="Chiu K.P."/>
            <person name="Choudhary V."/>
            <person name="Christoffels A."/>
            <person name="Clutterbuck D.R."/>
            <person name="Crowe M.L."/>
            <person name="Dalla E."/>
            <person name="Dalrymple B.P."/>
            <person name="de Bono B."/>
            <person name="Della Gatta G."/>
            <person name="di Bernardo D."/>
            <person name="Down T."/>
            <person name="Engstrom P."/>
            <person name="Fagiolini M."/>
            <person name="Faulkner G."/>
            <person name="Fletcher C.F."/>
            <person name="Fukushima T."/>
            <person name="Furuno M."/>
            <person name="Futaki S."/>
            <person name="Gariboldi M."/>
            <person name="Georgii-Hemming P."/>
            <person name="Gingeras T.R."/>
            <person name="Gojobori T."/>
            <person name="Green R.E."/>
            <person name="Gustincich S."/>
            <person name="Harbers M."/>
            <person name="Hayashi Y."/>
            <person name="Hensch T.K."/>
            <person name="Hirokawa N."/>
            <person name="Hill D."/>
            <person name="Huminiecki L."/>
            <person name="Iacono M."/>
            <person name="Ikeo K."/>
            <person name="Iwama A."/>
            <person name="Ishikawa T."/>
            <person name="Jakt M."/>
            <person name="Kanapin A."/>
            <person name="Katoh M."/>
            <person name="Kawasawa Y."/>
            <person name="Kelso J."/>
            <person name="Kitamura H."/>
            <person name="Kitano H."/>
            <person name="Kollias G."/>
            <person name="Krishnan S.P."/>
            <person name="Kruger A."/>
            <person name="Kummerfeld S.K."/>
            <person name="Kurochkin I.V."/>
            <person name="Lareau L.F."/>
            <person name="Lazarevic D."/>
            <person name="Lipovich L."/>
            <person name="Liu J."/>
            <person name="Liuni S."/>
            <person name="McWilliam S."/>
            <person name="Madan Babu M."/>
            <person name="Madera M."/>
            <person name="Marchionni L."/>
            <person name="Matsuda H."/>
            <person name="Matsuzawa S."/>
            <person name="Miki H."/>
            <person name="Mignone F."/>
            <person name="Miyake S."/>
            <person name="Morris K."/>
            <person name="Mottagui-Tabar S."/>
            <person name="Mulder N."/>
            <person name="Nakano N."/>
            <person name="Nakauchi H."/>
            <person name="Ng P."/>
            <person name="Nilsson R."/>
            <person name="Nishiguchi S."/>
            <person name="Nishikawa S."/>
            <person name="Nori F."/>
            <person name="Ohara O."/>
            <person name="Okazaki Y."/>
            <person name="Orlando V."/>
            <person name="Pang K.C."/>
            <person name="Pavan W.J."/>
            <person name="Pavesi G."/>
            <person name="Pesole G."/>
            <person name="Petrovsky N."/>
            <person name="Piazza S."/>
            <person name="Reed J."/>
            <person name="Reid J.F."/>
            <person name="Ring B.Z."/>
            <person name="Ringwald M."/>
            <person name="Rost B."/>
            <person name="Ruan Y."/>
            <person name="Salzberg S.L."/>
            <person name="Sandelin A."/>
            <person name="Schneider C."/>
            <person name="Schoenbach C."/>
            <person name="Sekiguchi K."/>
            <person name="Semple C.A."/>
            <person name="Seno S."/>
            <person name="Sessa L."/>
            <person name="Sheng Y."/>
            <person name="Shibata Y."/>
            <person name="Shimada H."/>
            <person name="Shimada K."/>
            <person name="Silva D."/>
            <person name="Sinclair B."/>
            <person name="Sperling S."/>
            <person name="Stupka E."/>
            <person name="Sugiura K."/>
            <person name="Sultana R."/>
            <person name="Takenaka Y."/>
            <person name="Taki K."/>
            <person name="Tammoja K."/>
            <person name="Tan S.L."/>
            <person name="Tang S."/>
            <person name="Taylor M.S."/>
            <person name="Tegner J."/>
            <person name="Teichmann S.A."/>
            <person name="Ueda H.R."/>
            <person name="van Nimwegen E."/>
            <person name="Verardo R."/>
            <person name="Wei C.L."/>
            <person name="Yagi K."/>
            <person name="Yamanishi H."/>
            <person name="Zabarovsky E."/>
            <person name="Zhu S."/>
            <person name="Zimmer A."/>
            <person name="Hide W."/>
            <person name="Bult C."/>
            <person name="Grimmond S.M."/>
            <person name="Teasdale R.D."/>
            <person name="Liu E.T."/>
            <person name="Brusic V."/>
            <person name="Quackenbush J."/>
            <person name="Wahlestedt C."/>
            <person name="Mattick J.S."/>
            <person name="Hume D.A."/>
            <person name="Kai C."/>
            <person name="Sasaki D."/>
            <person name="Tomaru Y."/>
            <person name="Fukuda S."/>
            <person name="Kanamori-Katayama M."/>
            <person name="Suzuki M."/>
            <person name="Aoki J."/>
            <person name="Arakawa T."/>
            <person name="Iida J."/>
            <person name="Imamura K."/>
            <person name="Itoh M."/>
            <person name="Kato T."/>
            <person name="Kawaji H."/>
            <person name="Kawagashira N."/>
            <person name="Kawashima T."/>
            <person name="Kojima M."/>
            <person name="Kondo S."/>
            <person name="Konno H."/>
            <person name="Nakano K."/>
            <person name="Ninomiya N."/>
            <person name="Nishio T."/>
            <person name="Okada M."/>
            <person name="Plessy C."/>
            <person name="Shibata K."/>
            <person name="Shiraki T."/>
            <person name="Suzuki S."/>
            <person name="Tagami M."/>
            <person name="Waki K."/>
            <person name="Watahiki A."/>
            <person name="Okamura-Oho Y."/>
            <person name="Suzuki H."/>
            <person name="Kawai J."/>
            <person name="Hayashizaki Y."/>
        </authorList>
    </citation>
    <scope>NUCLEOTIDE SEQUENCE [LARGE SCALE MRNA]</scope>
    <source>
        <strain>C57BL/6J</strain>
        <tissue>Bone</tissue>
        <tissue>Corpora quadrigemina</tissue>
        <tissue>Liver</tissue>
        <tissue>Retina</tissue>
    </source>
</reference>
<reference key="2">
    <citation type="journal article" date="2004" name="Genome Res.">
        <title>The status, quality, and expansion of the NIH full-length cDNA project: the Mammalian Gene Collection (MGC).</title>
        <authorList>
            <consortium name="The MGC Project Team"/>
        </authorList>
    </citation>
    <scope>NUCLEOTIDE SEQUENCE [LARGE SCALE MRNA]</scope>
    <source>
        <strain>FVB/N</strain>
        <tissue>Kidney</tissue>
    </source>
</reference>
<reference key="3">
    <citation type="journal article" date="2010" name="Cell">
        <title>A tissue-specific atlas of mouse protein phosphorylation and expression.</title>
        <authorList>
            <person name="Huttlin E.L."/>
            <person name="Jedrychowski M.P."/>
            <person name="Elias J.E."/>
            <person name="Goswami T."/>
            <person name="Rad R."/>
            <person name="Beausoleil S.A."/>
            <person name="Villen J."/>
            <person name="Haas W."/>
            <person name="Sowa M.E."/>
            <person name="Gygi S.P."/>
        </authorList>
    </citation>
    <scope>IDENTIFICATION BY MASS SPECTROMETRY [LARGE SCALE ANALYSIS]</scope>
    <source>
        <tissue>Brain</tissue>
        <tissue>Kidney</tissue>
        <tissue>Lung</tissue>
        <tissue>Pancreas</tissue>
    </source>
</reference>
<reference key="4">
    <citation type="journal article" date="2014" name="J. Biol. Chem.">
        <title>The protein synthesis inhibitor blasticidin S enters mammalian cells via leucine-rich repeat-containing protein 8D.</title>
        <authorList>
            <person name="Lee C.C."/>
            <person name="Freinkman E."/>
            <person name="Sabatini D.M."/>
            <person name="Ploegh H.L."/>
        </authorList>
    </citation>
    <scope>SUBUNIT</scope>
    <scope>INTERACTION WITH LRRC8B; LRRC8C AND LRRC8A</scope>
</reference>
<reference key="5">
    <citation type="journal article" date="2018" name="Nat. Commun.">
        <title>LRRC8/VRAC anion channels enhance beta-cell glucose sensing and insulin secretion.</title>
        <authorList>
            <person name="Stuhlmann T."/>
            <person name="Planells-Cases R."/>
            <person name="Jentsch T.J."/>
        </authorList>
    </citation>
    <scope>FUNCTION</scope>
    <scope>SUBCELLULAR LOCATION</scope>
    <scope>TISSUE SPECIFICITY</scope>
</reference>
<reference key="6">
    <citation type="journal article" date="2023" name="Nat. Struct. Mol. Biol.">
        <title>Structure of a volume-regulated heteromeric LRRC8A/C channel.</title>
        <authorList>
            <person name="Rutz S."/>
            <person name="Deneka D."/>
            <person name="Dittmann A."/>
            <person name="Sawicka M."/>
            <person name="Dutzler R."/>
        </authorList>
    </citation>
    <scope>FUNCTION</scope>
    <scope>TRANSPORTER ACTIVITY</scope>
    <scope>SUBUNIT</scope>
</reference>
<sequence>MFTLAEVASLNDIQPTYRILKPWWDVFMDYLAVVMLMVAIFAGTMQLTKDQVVCLPVLPSPANSKAHTPPGNADITTEVPRMETATHQDQNGQTTTNDVAFGTSAVTPDIPLQATHPHAESTLPNQEAKKEKRDPTGRKTNLDFQQYVFINQMCYHLALPWYSKYFPYLALIHTIILMVSSNFWFKYPKTCSKVEHFVSILGKCFESPWTTKALSETACEDSEENKQRITGAQTLPKHVSTSSDEGSPSASTPMINKTGFKFSAEKPVIEVPSMTILDKKDGEQAKALFEKVRKFRAHVEDSDLIYKLYVVQTLIKTAKFIFILCYTANFVNAISFEHVCKPKVEHLTGYEVFECTHNMAYMLKKLLISYISIICVYGFICLYTLFWLFRIPLKEYSFEKVREESSFSDIPDVKNDFAFLLHMVDQYDQLYSKRFGVFLSEVSENKLREISLNHEWTFEKLRQHVSRNAQDKQELHLFMLSGVPDAVFDLTDLDVLKLELIPEAKIPAKISQMTNLQELHLCHCPAKVEQTAFSFLRDHLRCLHVKFTDVAEIPAWVYLLKNLRELYLIGNLNSENNKMIGLESLRELRHLKILHVKSNLTKVPSNITDVAPHLTKLVIHNDGTKLLVLNSLKKMMNVAELELQNCELERIPHAIFSLSNLQELDLKSNNIRTIEEIISFQHLKRLTCLKLWHNKIVAIPPSITHVKNLESLYFSNNKLESLPTAVFSLQKLRCLDVSYNNISTIPIEIGLLQNLQHLHITGNKVDILPKQLFKCVKLRTLNLGQNCIASLPEKISQLTQLTQLELKGNCLDRLPAQLGQCRMLKKSGLVVEDQLFDTLPLEVKEALNQDVNVPFANGI</sequence>
<accession>Q8BGR2</accession>
<accession>Q3UVA9</accession>
<accession>Q8CI13</accession>
<keyword id="KW-0002">3D-structure</keyword>
<keyword id="KW-1003">Cell membrane</keyword>
<keyword id="KW-1015">Disulfide bond</keyword>
<keyword id="KW-0256">Endoplasmic reticulum</keyword>
<keyword id="KW-0407">Ion channel</keyword>
<keyword id="KW-0406">Ion transport</keyword>
<keyword id="KW-0433">Leucine-rich repeat</keyword>
<keyword id="KW-0472">Membrane</keyword>
<keyword id="KW-0597">Phosphoprotein</keyword>
<keyword id="KW-1185">Reference proteome</keyword>
<keyword id="KW-0677">Repeat</keyword>
<keyword id="KW-0812">Transmembrane</keyword>
<keyword id="KW-1133">Transmembrane helix</keyword>
<keyword id="KW-0813">Transport</keyword>
<evidence type="ECO:0000250" key="1">
    <source>
        <dbReference type="UniProtKB" id="Q7L1W4"/>
    </source>
</evidence>
<evidence type="ECO:0000250" key="2">
    <source>
        <dbReference type="UniProtKB" id="Q80WG5"/>
    </source>
</evidence>
<evidence type="ECO:0000256" key="3">
    <source>
        <dbReference type="SAM" id="MobiDB-lite"/>
    </source>
</evidence>
<evidence type="ECO:0000269" key="4">
    <source>
    </source>
</evidence>
<evidence type="ECO:0000269" key="5">
    <source>
    </source>
</evidence>
<evidence type="ECO:0000269" key="6">
    <source>
    </source>
</evidence>
<evidence type="ECO:0000303" key="7">
    <source>
    </source>
</evidence>
<evidence type="ECO:0000303" key="8">
    <source>
    </source>
</evidence>
<evidence type="ECO:0000305" key="9"/>
<evidence type="ECO:0000312" key="10">
    <source>
        <dbReference type="MGI" id="MGI:1922368"/>
    </source>
</evidence>
<evidence type="ECO:0007829" key="11">
    <source>
        <dbReference type="PDB" id="9DX7"/>
    </source>
</evidence>
<protein>
    <recommendedName>
        <fullName evidence="8">Volume-regulated anion channel subunit LRRC8D</fullName>
    </recommendedName>
    <alternativeName>
        <fullName evidence="10">Leucine-rich repeat-containing protein 5</fullName>
    </alternativeName>
    <alternativeName>
        <fullName evidence="7">Leucine-rich repeat-containing protein 8D</fullName>
    </alternativeName>
</protein>
<comment type="function">
    <text evidence="1 5 6">Non-essential component of the volume-regulated anion channel (VRAC, also named VSOAC channel), an anion channel required to maintain a constant cell volume in response to extracellular or intracellular osmotic changes (PubMed:29773801, PubMed:36522427). The VRAC channel conducts iodide better than chloride and can also conduct organic osmolytes like taurine (By similarity). Plays a redundant role in the efflux of amino acids, such as aspartate, in response to osmotic stress family member (LRRC8B, LRRC8C, LRRC8D or LRRC8E); channel characteristics depend on the precise subunit composition (By similarity). Also acts as a regulator of glucose-sensing in pancreatic beta cells: VRAC currents, generated in response to hypotonicity- or glucose-induced beta cell swelling, depolarize cells, thereby causing electrical excitation, leading to increase glucose sensitivity and insulin secretion (PubMed:29773801). VRAC channels containing LRRC8D inhibit transport of immunoreactive cyclic dinucleotide GMP-AMP (2'-3'-cGAMP), an immune messenger produced in response to DNA virus in the cytosol (PubMed:36522427).</text>
</comment>
<comment type="catalytic activity">
    <reaction evidence="6">
        <text>chloride(in) = chloride(out)</text>
        <dbReference type="Rhea" id="RHEA:29823"/>
        <dbReference type="ChEBI" id="CHEBI:17996"/>
    </reaction>
</comment>
<comment type="catalytic activity">
    <reaction evidence="1">
        <text>iodide(out) = iodide(in)</text>
        <dbReference type="Rhea" id="RHEA:66324"/>
        <dbReference type="ChEBI" id="CHEBI:16382"/>
    </reaction>
</comment>
<comment type="catalytic activity">
    <reaction evidence="1">
        <text>taurine(out) = taurine(in)</text>
        <dbReference type="Rhea" id="RHEA:66328"/>
        <dbReference type="ChEBI" id="CHEBI:507393"/>
    </reaction>
</comment>
<comment type="subunit">
    <text evidence="4 6">Heterohexamer; oligomerizes with other LRRC8 proteins (LRRC8A, LRRC8B, LRRC8C and/or LRRC8E) to form a heterohexamer (PubMed:36522427). In vivo, the subunit composition may depend primarily on expression levels, and heterooligomeric channels containing various proportions of the different LRRC8 proteins may coexist (PubMed:24782309, PubMed:36522427).</text>
</comment>
<comment type="subcellular location">
    <subcellularLocation>
        <location evidence="5">Cell membrane</location>
        <topology evidence="1">Multi-pass membrane protein</topology>
    </subcellularLocation>
    <subcellularLocation>
        <location evidence="1">Endoplasmic reticulum membrane</location>
        <topology evidence="1">Multi-pass membrane protein</topology>
    </subcellularLocation>
    <text evidence="1 5">In the absence of LRRC8A, resides primarily in a cytoplasmic compartment, probably the endoplasmic reticulum (PubMed:29773801). Requires LRRC8A for expression at the cell membrane (By similarity).</text>
</comment>
<comment type="tissue specificity">
    <text evidence="5">Expressed in pancreatic beta cells (PubMed:29773801). Also expressed in glucagon-secreting pancreatic alpha cells (PubMed:29773801).</text>
</comment>
<comment type="domain">
    <text evidence="1">The volume-regulated anion channel (VRAC) channel forms a trimer of dimers, with symmetry mismatch between the pore-forming domain and the cytosolic LRR repeats, a topology similar to gap junction proteins.</text>
</comment>
<comment type="similarity">
    <text evidence="9">Belongs to the LRRC8 family.</text>
</comment>
<organism>
    <name type="scientific">Mus musculus</name>
    <name type="common">Mouse</name>
    <dbReference type="NCBI Taxonomy" id="10090"/>
    <lineage>
        <taxon>Eukaryota</taxon>
        <taxon>Metazoa</taxon>
        <taxon>Chordata</taxon>
        <taxon>Craniata</taxon>
        <taxon>Vertebrata</taxon>
        <taxon>Euteleostomi</taxon>
        <taxon>Mammalia</taxon>
        <taxon>Eutheria</taxon>
        <taxon>Euarchontoglires</taxon>
        <taxon>Glires</taxon>
        <taxon>Rodentia</taxon>
        <taxon>Myomorpha</taxon>
        <taxon>Muroidea</taxon>
        <taxon>Muridae</taxon>
        <taxon>Murinae</taxon>
        <taxon>Mus</taxon>
        <taxon>Mus</taxon>
    </lineage>
</organism>
<feature type="chain" id="PRO_0000084494" description="Volume-regulated anion channel subunit LRRC8D">
    <location>
        <begin position="1"/>
        <end position="859"/>
    </location>
</feature>
<feature type="topological domain" description="Cytoplasmic" evidence="1">
    <location>
        <begin position="1"/>
        <end position="22"/>
    </location>
</feature>
<feature type="transmembrane region" description="Helical; Name=1" evidence="1">
    <location>
        <begin position="23"/>
        <end position="48"/>
    </location>
</feature>
<feature type="topological domain" description="Extracellular" evidence="1">
    <location>
        <begin position="49"/>
        <end position="164"/>
    </location>
</feature>
<feature type="transmembrane region" description="Helical; Name=2" evidence="1">
    <location>
        <begin position="165"/>
        <end position="183"/>
    </location>
</feature>
<feature type="topological domain" description="Cytoplasmic" evidence="1">
    <location>
        <begin position="184"/>
        <end position="309"/>
    </location>
</feature>
<feature type="transmembrane region" description="Helical; Name=3" evidence="1">
    <location>
        <begin position="310"/>
        <end position="331"/>
    </location>
</feature>
<feature type="topological domain" description="Extracellular" evidence="1">
    <location>
        <begin position="332"/>
        <end position="361"/>
    </location>
</feature>
<feature type="transmembrane region" description="Helical; Name=4" evidence="1">
    <location>
        <begin position="362"/>
        <end position="387"/>
    </location>
</feature>
<feature type="topological domain" description="Cytoplasmic" evidence="1">
    <location>
        <begin position="388"/>
        <end position="859"/>
    </location>
</feature>
<feature type="repeat" description="LRR 1">
    <location>
        <begin position="515"/>
        <end position="535"/>
    </location>
</feature>
<feature type="repeat" description="LRR 2">
    <location>
        <begin position="539"/>
        <end position="560"/>
    </location>
</feature>
<feature type="repeat" description="LRR 3">
    <location>
        <begin position="562"/>
        <end position="583"/>
    </location>
</feature>
<feature type="repeat" description="LRR 4">
    <location>
        <begin position="590"/>
        <end position="610"/>
    </location>
</feature>
<feature type="repeat" description="LRR 5">
    <location>
        <begin position="613"/>
        <end position="633"/>
    </location>
</feature>
<feature type="repeat" description="LRR 6">
    <location>
        <begin position="637"/>
        <end position="658"/>
    </location>
</feature>
<feature type="repeat" description="LRR 7">
    <location>
        <begin position="660"/>
        <end position="681"/>
    </location>
</feature>
<feature type="repeat" description="LRR 8">
    <location>
        <begin position="685"/>
        <end position="706"/>
    </location>
</feature>
<feature type="repeat" description="LRR 9">
    <location>
        <begin position="708"/>
        <end position="729"/>
    </location>
</feature>
<feature type="repeat" description="LRR 10">
    <location>
        <begin position="731"/>
        <end position="752"/>
    </location>
</feature>
<feature type="repeat" description="LRR 11">
    <location>
        <begin position="754"/>
        <end position="775"/>
    </location>
</feature>
<feature type="repeat" description="LRR 12">
    <location>
        <begin position="777"/>
        <end position="798"/>
    </location>
</feature>
<feature type="repeat" description="LRR 13">
    <location>
        <begin position="800"/>
        <end position="821"/>
    </location>
</feature>
<feature type="region of interest" description="Disordered" evidence="3">
    <location>
        <begin position="110"/>
        <end position="138"/>
    </location>
</feature>
<feature type="region of interest" description="Disordered" evidence="3">
    <location>
        <begin position="222"/>
        <end position="252"/>
    </location>
</feature>
<feature type="compositionally biased region" description="Basic and acidic residues" evidence="3">
    <location>
        <begin position="127"/>
        <end position="138"/>
    </location>
</feature>
<feature type="compositionally biased region" description="Polar residues" evidence="3">
    <location>
        <begin position="228"/>
        <end position="252"/>
    </location>
</feature>
<feature type="modified residue" description="Phosphoserine" evidence="1">
    <location>
        <position position="242"/>
    </location>
</feature>
<feature type="modified residue" description="Phosphoserine" evidence="1">
    <location>
        <position position="243"/>
    </location>
</feature>
<feature type="modified residue" description="Phosphoserine" evidence="1">
    <location>
        <position position="247"/>
    </location>
</feature>
<feature type="disulfide bond" evidence="2">
    <location>
        <begin position="54"/>
        <end position="355"/>
    </location>
</feature>
<feature type="sequence conflict" description="In Ref. 2; AAH37717." evidence="9" ref="2">
    <original>I</original>
    <variation>V</variation>
    <location>
        <position position="75"/>
    </location>
</feature>
<feature type="sequence conflict" description="In Ref. 2; AAH37717." evidence="9" ref="2">
    <original>A</original>
    <variation>V</variation>
    <location>
        <position position="128"/>
    </location>
</feature>
<feature type="helix" evidence="11">
    <location>
        <begin position="17"/>
        <end position="19"/>
    </location>
</feature>
<feature type="helix" evidence="11">
    <location>
        <begin position="23"/>
        <end position="48"/>
    </location>
</feature>
<feature type="strand" evidence="11">
    <location>
        <begin position="52"/>
        <end position="56"/>
    </location>
</feature>
<feature type="helix" evidence="11">
    <location>
        <begin position="144"/>
        <end position="157"/>
    </location>
</feature>
<feature type="helix" evidence="11">
    <location>
        <begin position="161"/>
        <end position="163"/>
    </location>
</feature>
<feature type="helix" evidence="11">
    <location>
        <begin position="166"/>
        <end position="181"/>
    </location>
</feature>
<feature type="helix" evidence="11">
    <location>
        <begin position="183"/>
        <end position="185"/>
    </location>
</feature>
<feature type="helix" evidence="11">
    <location>
        <begin position="188"/>
        <end position="205"/>
    </location>
</feature>
<feature type="helix" evidence="11">
    <location>
        <begin position="208"/>
        <end position="215"/>
    </location>
</feature>
<feature type="helix" evidence="11">
    <location>
        <begin position="279"/>
        <end position="299"/>
    </location>
</feature>
<feature type="helix" evidence="11">
    <location>
        <begin position="304"/>
        <end position="328"/>
    </location>
</feature>
<feature type="strand" evidence="11">
    <location>
        <begin position="336"/>
        <end position="340"/>
    </location>
</feature>
<feature type="turn" evidence="11">
    <location>
        <begin position="345"/>
        <end position="347"/>
    </location>
</feature>
<feature type="strand" evidence="11">
    <location>
        <begin position="353"/>
        <end position="358"/>
    </location>
</feature>
<feature type="helix" evidence="11">
    <location>
        <begin position="361"/>
        <end position="390"/>
    </location>
</feature>
<feature type="helix" evidence="11">
    <location>
        <begin position="399"/>
        <end position="404"/>
    </location>
</feature>
<feature type="helix" evidence="11">
    <location>
        <begin position="415"/>
        <end position="427"/>
    </location>
</feature>
<feature type="helix" evidence="11">
    <location>
        <begin position="429"/>
        <end position="438"/>
    </location>
</feature>
<feature type="helix" evidence="11">
    <location>
        <begin position="441"/>
        <end position="455"/>
    </location>
</feature>
<name>LRC8D_MOUSE</name>
<proteinExistence type="evidence at protein level"/>
<dbReference type="EMBL" id="AK046249">
    <property type="protein sequence ID" value="BAC32656.1"/>
    <property type="molecule type" value="mRNA"/>
</dbReference>
<dbReference type="EMBL" id="AK050400">
    <property type="protein sequence ID" value="BAC34237.1"/>
    <property type="molecule type" value="mRNA"/>
</dbReference>
<dbReference type="EMBL" id="AK080722">
    <property type="protein sequence ID" value="BAC37994.1"/>
    <property type="molecule type" value="mRNA"/>
</dbReference>
<dbReference type="EMBL" id="AK137459">
    <property type="protein sequence ID" value="BAE23361.1"/>
    <property type="molecule type" value="mRNA"/>
</dbReference>
<dbReference type="EMBL" id="BC037717">
    <property type="protein sequence ID" value="AAH37717.1"/>
    <property type="molecule type" value="mRNA"/>
</dbReference>
<dbReference type="CCDS" id="CCDS19494.1"/>
<dbReference type="RefSeq" id="NP_001116240.1">
    <property type="nucleotide sequence ID" value="NM_001122768.1"/>
</dbReference>
<dbReference type="RefSeq" id="NP_848816.3">
    <property type="nucleotide sequence ID" value="NM_178701.3"/>
</dbReference>
<dbReference type="RefSeq" id="XP_006534956.1">
    <property type="nucleotide sequence ID" value="XM_006534893.3"/>
</dbReference>
<dbReference type="RefSeq" id="XP_006534957.1">
    <property type="nucleotide sequence ID" value="XM_006534894.5"/>
</dbReference>
<dbReference type="RefSeq" id="XP_006534958.1">
    <property type="nucleotide sequence ID" value="XM_006534895.3"/>
</dbReference>
<dbReference type="RefSeq" id="XP_006534959.1">
    <property type="nucleotide sequence ID" value="XM_006534896.3"/>
</dbReference>
<dbReference type="RefSeq" id="XP_011247738.1">
    <property type="nucleotide sequence ID" value="XM_011249436.2"/>
</dbReference>
<dbReference type="RefSeq" id="XP_036020966.1">
    <property type="nucleotide sequence ID" value="XM_036165073.1"/>
</dbReference>
<dbReference type="RefSeq" id="XP_036020967.1">
    <property type="nucleotide sequence ID" value="XM_036165074.1"/>
</dbReference>
<dbReference type="PDB" id="9DX7">
    <property type="method" value="EM"/>
    <property type="resolution" value="3.30 A"/>
    <property type="chains" value="E/F=1-859"/>
</dbReference>
<dbReference type="PDB" id="9DXA">
    <property type="method" value="EM"/>
    <property type="resolution" value="3.40 A"/>
    <property type="chains" value="E/F=1-859"/>
</dbReference>
<dbReference type="PDBsum" id="9DX7"/>
<dbReference type="PDBsum" id="9DXA"/>
<dbReference type="EMDB" id="EMD-47282"/>
<dbReference type="EMDB" id="EMD-47283"/>
<dbReference type="SMR" id="Q8BGR2"/>
<dbReference type="BioGRID" id="231133">
    <property type="interactions" value="1"/>
</dbReference>
<dbReference type="FunCoup" id="Q8BGR2">
    <property type="interactions" value="768"/>
</dbReference>
<dbReference type="STRING" id="10090.ENSMUSP00000113603"/>
<dbReference type="iPTMnet" id="Q8BGR2"/>
<dbReference type="PhosphoSitePlus" id="Q8BGR2"/>
<dbReference type="PaxDb" id="10090-ENSMUSP00000113603"/>
<dbReference type="ProteomicsDB" id="252516"/>
<dbReference type="Antibodypedia" id="2631">
    <property type="antibodies" value="49 antibodies from 18 providers"/>
</dbReference>
<dbReference type="DNASU" id="231549"/>
<dbReference type="Ensembl" id="ENSMUST00000060531.16">
    <property type="protein sequence ID" value="ENSMUSP00000057293.10"/>
    <property type="gene ID" value="ENSMUSG00000046079.17"/>
</dbReference>
<dbReference type="Ensembl" id="ENSMUST00000120847.8">
    <property type="protein sequence ID" value="ENSMUSP00000113603.2"/>
    <property type="gene ID" value="ENSMUSG00000046079.17"/>
</dbReference>
<dbReference type="GeneID" id="231549"/>
<dbReference type="KEGG" id="mmu:231549"/>
<dbReference type="UCSC" id="uc008ylg.2">
    <property type="organism name" value="mouse"/>
</dbReference>
<dbReference type="AGR" id="MGI:1922368"/>
<dbReference type="CTD" id="55144"/>
<dbReference type="MGI" id="MGI:1922368">
    <property type="gene designation" value="Lrrc8d"/>
</dbReference>
<dbReference type="VEuPathDB" id="HostDB:ENSMUSG00000046079"/>
<dbReference type="eggNOG" id="KOG0619">
    <property type="taxonomic scope" value="Eukaryota"/>
</dbReference>
<dbReference type="GeneTree" id="ENSGT00940000154043"/>
<dbReference type="HOGENOM" id="CLU_019019_0_0_1"/>
<dbReference type="InParanoid" id="Q8BGR2"/>
<dbReference type="OMA" id="FANGCKC"/>
<dbReference type="OrthoDB" id="676979at2759"/>
<dbReference type="PhylomeDB" id="Q8BGR2"/>
<dbReference type="TreeFam" id="TF331443"/>
<dbReference type="Reactome" id="R-MMU-5223345">
    <property type="pathway name" value="Miscellaneous transport and binding events"/>
</dbReference>
<dbReference type="BioGRID-ORCS" id="231549">
    <property type="hits" value="2 hits in 77 CRISPR screens"/>
</dbReference>
<dbReference type="ChiTaRS" id="Lrrc8d">
    <property type="organism name" value="mouse"/>
</dbReference>
<dbReference type="PRO" id="PR:Q8BGR2"/>
<dbReference type="Proteomes" id="UP000000589">
    <property type="component" value="Chromosome 5"/>
</dbReference>
<dbReference type="RNAct" id="Q8BGR2">
    <property type="molecule type" value="protein"/>
</dbReference>
<dbReference type="Bgee" id="ENSMUSG00000046079">
    <property type="expression patterns" value="Expressed in otolith organ and 246 other cell types or tissues"/>
</dbReference>
<dbReference type="ExpressionAtlas" id="Q8BGR2">
    <property type="expression patterns" value="baseline and differential"/>
</dbReference>
<dbReference type="GO" id="GO:0005737">
    <property type="term" value="C:cytoplasm"/>
    <property type="evidence" value="ECO:0000250"/>
    <property type="project" value="UniProtKB"/>
</dbReference>
<dbReference type="GO" id="GO:0005789">
    <property type="term" value="C:endoplasmic reticulum membrane"/>
    <property type="evidence" value="ECO:0007669"/>
    <property type="project" value="UniProtKB-SubCell"/>
</dbReference>
<dbReference type="GO" id="GO:0016020">
    <property type="term" value="C:membrane"/>
    <property type="evidence" value="ECO:0000250"/>
    <property type="project" value="UniProtKB"/>
</dbReference>
<dbReference type="GO" id="GO:0034702">
    <property type="term" value="C:monoatomic ion channel complex"/>
    <property type="evidence" value="ECO:0000250"/>
    <property type="project" value="UniProtKB"/>
</dbReference>
<dbReference type="GO" id="GO:0005886">
    <property type="term" value="C:plasma membrane"/>
    <property type="evidence" value="ECO:0000314"/>
    <property type="project" value="UniProtKB"/>
</dbReference>
<dbReference type="GO" id="GO:0005225">
    <property type="term" value="F:volume-sensitive anion channel activity"/>
    <property type="evidence" value="ECO:0000315"/>
    <property type="project" value="UniProtKB"/>
</dbReference>
<dbReference type="GO" id="GO:0015810">
    <property type="term" value="P:aspartate transmembrane transport"/>
    <property type="evidence" value="ECO:0000250"/>
    <property type="project" value="UniProtKB"/>
</dbReference>
<dbReference type="GO" id="GO:0071470">
    <property type="term" value="P:cellular response to osmotic stress"/>
    <property type="evidence" value="ECO:0000250"/>
    <property type="project" value="UniProtKB"/>
</dbReference>
<dbReference type="GO" id="GO:0001678">
    <property type="term" value="P:intracellular glucose homeostasis"/>
    <property type="evidence" value="ECO:0000315"/>
    <property type="project" value="UniProtKB"/>
</dbReference>
<dbReference type="GO" id="GO:0098656">
    <property type="term" value="P:monoatomic anion transmembrane transport"/>
    <property type="evidence" value="ECO:0000250"/>
    <property type="project" value="UniProtKB"/>
</dbReference>
<dbReference type="GO" id="GO:0034214">
    <property type="term" value="P:protein hexamerization"/>
    <property type="evidence" value="ECO:0000250"/>
    <property type="project" value="UniProtKB"/>
</dbReference>
<dbReference type="GO" id="GO:0015734">
    <property type="term" value="P:taurine transmembrane transport"/>
    <property type="evidence" value="ECO:0000250"/>
    <property type="project" value="UniProtKB"/>
</dbReference>
<dbReference type="FunFam" id="3.80.10.10:FF:000123">
    <property type="entry name" value="Volume-regulated anion channel subunit LRRC8D"/>
    <property type="match status" value="1"/>
</dbReference>
<dbReference type="Gene3D" id="3.80.10.10">
    <property type="entry name" value="Ribonuclease Inhibitor"/>
    <property type="match status" value="1"/>
</dbReference>
<dbReference type="InterPro" id="IPR001611">
    <property type="entry name" value="Leu-rich_rpt"/>
</dbReference>
<dbReference type="InterPro" id="IPR003591">
    <property type="entry name" value="Leu-rich_rpt_typical-subtyp"/>
</dbReference>
<dbReference type="InterPro" id="IPR032675">
    <property type="entry name" value="LRR_dom_sf"/>
</dbReference>
<dbReference type="InterPro" id="IPR050216">
    <property type="entry name" value="LRR_domain-containing"/>
</dbReference>
<dbReference type="InterPro" id="IPR021040">
    <property type="entry name" value="LRRC8_Pannexin-like"/>
</dbReference>
<dbReference type="PANTHER" id="PTHR48051">
    <property type="match status" value="1"/>
</dbReference>
<dbReference type="PANTHER" id="PTHR48051:SF54">
    <property type="entry name" value="LEUCINE-RICH REPEAT-CONTAINING PROTEIN"/>
    <property type="match status" value="1"/>
</dbReference>
<dbReference type="Pfam" id="PF13855">
    <property type="entry name" value="LRR_8"/>
    <property type="match status" value="2"/>
</dbReference>
<dbReference type="Pfam" id="PF12534">
    <property type="entry name" value="Pannexin_like"/>
    <property type="match status" value="1"/>
</dbReference>
<dbReference type="SMART" id="SM00365">
    <property type="entry name" value="LRR_SD22"/>
    <property type="match status" value="3"/>
</dbReference>
<dbReference type="SMART" id="SM00369">
    <property type="entry name" value="LRR_TYP"/>
    <property type="match status" value="7"/>
</dbReference>
<dbReference type="SUPFAM" id="SSF52058">
    <property type="entry name" value="L domain-like"/>
    <property type="match status" value="1"/>
</dbReference>
<dbReference type="PROSITE" id="PS51450">
    <property type="entry name" value="LRR"/>
    <property type="match status" value="9"/>
</dbReference>